<comment type="function">
    <text evidence="1">This protein binds to 23S rRNA in the presence of protein L20.</text>
</comment>
<comment type="subunit">
    <text evidence="1">Part of the 50S ribosomal subunit. Contacts protein L20.</text>
</comment>
<comment type="similarity">
    <text evidence="1">Belongs to the bacterial ribosomal protein bL21 family.</text>
</comment>
<comment type="sequence caution" evidence="2">
    <conflict type="erroneous initiation">
        <sequence resource="EMBL-CDS" id="AAM84260"/>
    </conflict>
</comment>
<comment type="sequence caution" evidence="2">
    <conflict type="erroneous initiation">
        <sequence resource="EMBL-CDS" id="AAS60841"/>
    </conflict>
</comment>
<proteinExistence type="inferred from homology"/>
<dbReference type="EMBL" id="AL590842">
    <property type="protein sequence ID" value="CAL22100.1"/>
    <property type="molecule type" value="Genomic_DNA"/>
</dbReference>
<dbReference type="EMBL" id="AE009952">
    <property type="protein sequence ID" value="AAM84260.1"/>
    <property type="status" value="ALT_INIT"/>
    <property type="molecule type" value="Genomic_DNA"/>
</dbReference>
<dbReference type="EMBL" id="AE017042">
    <property type="protein sequence ID" value="AAS60841.1"/>
    <property type="status" value="ALT_INIT"/>
    <property type="molecule type" value="Genomic_DNA"/>
</dbReference>
<dbReference type="PIR" id="AI0426">
    <property type="entry name" value="AI0426"/>
</dbReference>
<dbReference type="RefSeq" id="WP_002210178.1">
    <property type="nucleotide sequence ID" value="NZ_WUCM01000036.1"/>
</dbReference>
<dbReference type="RefSeq" id="YP_002348401.1">
    <property type="nucleotide sequence ID" value="NC_003143.1"/>
</dbReference>
<dbReference type="SMR" id="Q0WBD7"/>
<dbReference type="STRING" id="214092.YPO3512"/>
<dbReference type="PaxDb" id="214092-YPO3512"/>
<dbReference type="EnsemblBacteria" id="AAS60841">
    <property type="protein sequence ID" value="AAS60841"/>
    <property type="gene ID" value="YP_0571"/>
</dbReference>
<dbReference type="GeneID" id="57975202"/>
<dbReference type="KEGG" id="ype:YPO3512"/>
<dbReference type="KEGG" id="ypk:y0672"/>
<dbReference type="KEGG" id="ypm:YP_0571"/>
<dbReference type="PATRIC" id="fig|214092.21.peg.4006"/>
<dbReference type="eggNOG" id="COG0261">
    <property type="taxonomic scope" value="Bacteria"/>
</dbReference>
<dbReference type="HOGENOM" id="CLU_061463_3_3_6"/>
<dbReference type="OMA" id="HRQPFTK"/>
<dbReference type="OrthoDB" id="9813334at2"/>
<dbReference type="Proteomes" id="UP000000815">
    <property type="component" value="Chromosome"/>
</dbReference>
<dbReference type="Proteomes" id="UP000001019">
    <property type="component" value="Chromosome"/>
</dbReference>
<dbReference type="Proteomes" id="UP000002490">
    <property type="component" value="Chromosome"/>
</dbReference>
<dbReference type="GO" id="GO:0005737">
    <property type="term" value="C:cytoplasm"/>
    <property type="evidence" value="ECO:0007669"/>
    <property type="project" value="UniProtKB-ARBA"/>
</dbReference>
<dbReference type="GO" id="GO:1990904">
    <property type="term" value="C:ribonucleoprotein complex"/>
    <property type="evidence" value="ECO:0007669"/>
    <property type="project" value="UniProtKB-KW"/>
</dbReference>
<dbReference type="GO" id="GO:0005840">
    <property type="term" value="C:ribosome"/>
    <property type="evidence" value="ECO:0007669"/>
    <property type="project" value="UniProtKB-KW"/>
</dbReference>
<dbReference type="GO" id="GO:0019843">
    <property type="term" value="F:rRNA binding"/>
    <property type="evidence" value="ECO:0007669"/>
    <property type="project" value="UniProtKB-UniRule"/>
</dbReference>
<dbReference type="GO" id="GO:0003735">
    <property type="term" value="F:structural constituent of ribosome"/>
    <property type="evidence" value="ECO:0000318"/>
    <property type="project" value="GO_Central"/>
</dbReference>
<dbReference type="GO" id="GO:0006412">
    <property type="term" value="P:translation"/>
    <property type="evidence" value="ECO:0007669"/>
    <property type="project" value="UniProtKB-UniRule"/>
</dbReference>
<dbReference type="HAMAP" id="MF_01363">
    <property type="entry name" value="Ribosomal_bL21"/>
    <property type="match status" value="1"/>
</dbReference>
<dbReference type="InterPro" id="IPR028909">
    <property type="entry name" value="bL21-like"/>
</dbReference>
<dbReference type="InterPro" id="IPR036164">
    <property type="entry name" value="bL21-like_sf"/>
</dbReference>
<dbReference type="InterPro" id="IPR001787">
    <property type="entry name" value="Ribosomal_bL21"/>
</dbReference>
<dbReference type="InterPro" id="IPR018258">
    <property type="entry name" value="Ribosomal_bL21_CS"/>
</dbReference>
<dbReference type="NCBIfam" id="TIGR00061">
    <property type="entry name" value="L21"/>
    <property type="match status" value="1"/>
</dbReference>
<dbReference type="PANTHER" id="PTHR21349">
    <property type="entry name" value="50S RIBOSOMAL PROTEIN L21"/>
    <property type="match status" value="1"/>
</dbReference>
<dbReference type="PANTHER" id="PTHR21349:SF0">
    <property type="entry name" value="LARGE RIBOSOMAL SUBUNIT PROTEIN BL21M"/>
    <property type="match status" value="1"/>
</dbReference>
<dbReference type="Pfam" id="PF00829">
    <property type="entry name" value="Ribosomal_L21p"/>
    <property type="match status" value="1"/>
</dbReference>
<dbReference type="SUPFAM" id="SSF141091">
    <property type="entry name" value="L21p-like"/>
    <property type="match status" value="1"/>
</dbReference>
<dbReference type="PROSITE" id="PS01169">
    <property type="entry name" value="RIBOSOMAL_L21"/>
    <property type="match status" value="1"/>
</dbReference>
<organism>
    <name type="scientific">Yersinia pestis</name>
    <dbReference type="NCBI Taxonomy" id="632"/>
    <lineage>
        <taxon>Bacteria</taxon>
        <taxon>Pseudomonadati</taxon>
        <taxon>Pseudomonadota</taxon>
        <taxon>Gammaproteobacteria</taxon>
        <taxon>Enterobacterales</taxon>
        <taxon>Yersiniaceae</taxon>
        <taxon>Yersinia</taxon>
    </lineage>
</organism>
<protein>
    <recommendedName>
        <fullName evidence="1">Large ribosomal subunit protein bL21</fullName>
    </recommendedName>
    <alternativeName>
        <fullName evidence="2">50S ribosomal protein L21</fullName>
    </alternativeName>
</protein>
<accession>Q0WBD7</accession>
<accession>Q74X82</accession>
<accession>Q8D1D6</accession>
<name>RL21_YERPE</name>
<gene>
    <name evidence="1" type="primary">rplU</name>
    <name type="ordered locus">YPO3512</name>
    <name type="ordered locus">y0672</name>
    <name type="ordered locus">YP_0571</name>
</gene>
<feature type="chain" id="PRO_0000269435" description="Large ribosomal subunit protein bL21">
    <location>
        <begin position="1"/>
        <end position="103"/>
    </location>
</feature>
<sequence length="103" mass="11644">MYAVFQSGGKQHRVSEGQTIRLEKLDIATGETIEFDQVLMIANGEEINIGAPLVDGGKIKAEIIAHGRGEKIKIVKFRRRKHYRKQQGHRQWFTDVKITGISA</sequence>
<keyword id="KW-1185">Reference proteome</keyword>
<keyword id="KW-0687">Ribonucleoprotein</keyword>
<keyword id="KW-0689">Ribosomal protein</keyword>
<keyword id="KW-0694">RNA-binding</keyword>
<keyword id="KW-0699">rRNA-binding</keyword>
<evidence type="ECO:0000255" key="1">
    <source>
        <dbReference type="HAMAP-Rule" id="MF_01363"/>
    </source>
</evidence>
<evidence type="ECO:0000305" key="2"/>
<reference key="1">
    <citation type="journal article" date="2001" name="Nature">
        <title>Genome sequence of Yersinia pestis, the causative agent of plague.</title>
        <authorList>
            <person name="Parkhill J."/>
            <person name="Wren B.W."/>
            <person name="Thomson N.R."/>
            <person name="Titball R.W."/>
            <person name="Holden M.T.G."/>
            <person name="Prentice M.B."/>
            <person name="Sebaihia M."/>
            <person name="James K.D."/>
            <person name="Churcher C.M."/>
            <person name="Mungall K.L."/>
            <person name="Baker S."/>
            <person name="Basham D."/>
            <person name="Bentley S.D."/>
            <person name="Brooks K."/>
            <person name="Cerdeno-Tarraga A.-M."/>
            <person name="Chillingworth T."/>
            <person name="Cronin A."/>
            <person name="Davies R.M."/>
            <person name="Davis P."/>
            <person name="Dougan G."/>
            <person name="Feltwell T."/>
            <person name="Hamlin N."/>
            <person name="Holroyd S."/>
            <person name="Jagels K."/>
            <person name="Karlyshev A.V."/>
            <person name="Leather S."/>
            <person name="Moule S."/>
            <person name="Oyston P.C.F."/>
            <person name="Quail M.A."/>
            <person name="Rutherford K.M."/>
            <person name="Simmonds M."/>
            <person name="Skelton J."/>
            <person name="Stevens K."/>
            <person name="Whitehead S."/>
            <person name="Barrell B.G."/>
        </authorList>
    </citation>
    <scope>NUCLEOTIDE SEQUENCE [LARGE SCALE GENOMIC DNA]</scope>
    <source>
        <strain>CO-92 / Biovar Orientalis</strain>
    </source>
</reference>
<reference key="2">
    <citation type="journal article" date="2002" name="J. Bacteriol.">
        <title>Genome sequence of Yersinia pestis KIM.</title>
        <authorList>
            <person name="Deng W."/>
            <person name="Burland V."/>
            <person name="Plunkett G. III"/>
            <person name="Boutin A."/>
            <person name="Mayhew G.F."/>
            <person name="Liss P."/>
            <person name="Perna N.T."/>
            <person name="Rose D.J."/>
            <person name="Mau B."/>
            <person name="Zhou S."/>
            <person name="Schwartz D.C."/>
            <person name="Fetherston J.D."/>
            <person name="Lindler L.E."/>
            <person name="Brubaker R.R."/>
            <person name="Plano G.V."/>
            <person name="Straley S.C."/>
            <person name="McDonough K.A."/>
            <person name="Nilles M.L."/>
            <person name="Matson J.S."/>
            <person name="Blattner F.R."/>
            <person name="Perry R.D."/>
        </authorList>
    </citation>
    <scope>NUCLEOTIDE SEQUENCE [LARGE SCALE GENOMIC DNA]</scope>
    <source>
        <strain>KIM10+ / Biovar Mediaevalis</strain>
    </source>
</reference>
<reference key="3">
    <citation type="journal article" date="2004" name="DNA Res.">
        <title>Complete genome sequence of Yersinia pestis strain 91001, an isolate avirulent to humans.</title>
        <authorList>
            <person name="Song Y."/>
            <person name="Tong Z."/>
            <person name="Wang J."/>
            <person name="Wang L."/>
            <person name="Guo Z."/>
            <person name="Han Y."/>
            <person name="Zhang J."/>
            <person name="Pei D."/>
            <person name="Zhou D."/>
            <person name="Qin H."/>
            <person name="Pang X."/>
            <person name="Han Y."/>
            <person name="Zhai J."/>
            <person name="Li M."/>
            <person name="Cui B."/>
            <person name="Qi Z."/>
            <person name="Jin L."/>
            <person name="Dai R."/>
            <person name="Chen F."/>
            <person name="Li S."/>
            <person name="Ye C."/>
            <person name="Du Z."/>
            <person name="Lin W."/>
            <person name="Wang J."/>
            <person name="Yu J."/>
            <person name="Yang H."/>
            <person name="Wang J."/>
            <person name="Huang P."/>
            <person name="Yang R."/>
        </authorList>
    </citation>
    <scope>NUCLEOTIDE SEQUENCE [LARGE SCALE GENOMIC DNA]</scope>
    <source>
        <strain>91001 / Biovar Mediaevalis</strain>
    </source>
</reference>